<accession>Q6AN63</accession>
<proteinExistence type="inferred from homology"/>
<reference key="1">
    <citation type="journal article" date="2004" name="Environ. Microbiol.">
        <title>The genome of Desulfotalea psychrophila, a sulfate-reducing bacterium from permanently cold Arctic sediments.</title>
        <authorList>
            <person name="Rabus R."/>
            <person name="Ruepp A."/>
            <person name="Frickey T."/>
            <person name="Rattei T."/>
            <person name="Fartmann B."/>
            <person name="Stark M."/>
            <person name="Bauer M."/>
            <person name="Zibat A."/>
            <person name="Lombardot T."/>
            <person name="Becker I."/>
            <person name="Amann J."/>
            <person name="Gellner K."/>
            <person name="Teeling H."/>
            <person name="Leuschner W.D."/>
            <person name="Gloeckner F.-O."/>
            <person name="Lupas A.N."/>
            <person name="Amann R."/>
            <person name="Klenk H.-P."/>
        </authorList>
    </citation>
    <scope>NUCLEOTIDE SEQUENCE [LARGE SCALE GENOMIC DNA]</scope>
    <source>
        <strain>DSM 12343 / LSv54</strain>
    </source>
</reference>
<name>DNAJ_DESPS</name>
<sequence length="373" mass="41183">MTIDYYETLSVERDADQGTIKKAYRKLAMKYHPDRNQGDKEAETLFKECTEAYEVLRDESKRRIYDTYGHEGLKNNGQRDTGGAGDIFSHFGDLFGFGGGGGRSQARRNGPIEGNDLRYDVSISFMESIQGVSKEVKLSRRETCWTCEGTGSRPGYQPQTCPTCNGRGQVLRSQGFFQVSTTCPECEGEGQVIKEPCNDCHGEGLVKKTKTVAIKIPAGVDTGARMRLRGEGEGGRRGGPSGDLFVIVHVSSHEFFERDGDTIYCRLPVSMTTAALGDTVDVPTVHGKKNLKIPAGSQSGERFTLRGEGVPSLRGRGNGDMVVELHVETPTGLCEEQKKMLRDFHSFCEEHGQHEKTKGFFAKLFDEVLGKNK</sequence>
<organism>
    <name type="scientific">Desulfotalea psychrophila (strain LSv54 / DSM 12343)</name>
    <dbReference type="NCBI Taxonomy" id="177439"/>
    <lineage>
        <taxon>Bacteria</taxon>
        <taxon>Pseudomonadati</taxon>
        <taxon>Thermodesulfobacteriota</taxon>
        <taxon>Desulfobulbia</taxon>
        <taxon>Desulfobulbales</taxon>
        <taxon>Desulfocapsaceae</taxon>
        <taxon>Desulfotalea</taxon>
    </lineage>
</organism>
<protein>
    <recommendedName>
        <fullName evidence="1">Chaperone protein DnaJ</fullName>
    </recommendedName>
</protein>
<dbReference type="EMBL" id="CR522870">
    <property type="protein sequence ID" value="CAG36211.1"/>
    <property type="molecule type" value="Genomic_DNA"/>
</dbReference>
<dbReference type="RefSeq" id="WP_011188723.1">
    <property type="nucleotide sequence ID" value="NC_006138.1"/>
</dbReference>
<dbReference type="SMR" id="Q6AN63"/>
<dbReference type="STRING" id="177439.DP1482"/>
<dbReference type="KEGG" id="dps:DP1482"/>
<dbReference type="eggNOG" id="COG0484">
    <property type="taxonomic scope" value="Bacteria"/>
</dbReference>
<dbReference type="HOGENOM" id="CLU_017633_0_7_7"/>
<dbReference type="OrthoDB" id="9779889at2"/>
<dbReference type="Proteomes" id="UP000000602">
    <property type="component" value="Chromosome"/>
</dbReference>
<dbReference type="GO" id="GO:0005737">
    <property type="term" value="C:cytoplasm"/>
    <property type="evidence" value="ECO:0007669"/>
    <property type="project" value="UniProtKB-SubCell"/>
</dbReference>
<dbReference type="GO" id="GO:0005524">
    <property type="term" value="F:ATP binding"/>
    <property type="evidence" value="ECO:0007669"/>
    <property type="project" value="InterPro"/>
</dbReference>
<dbReference type="GO" id="GO:0031072">
    <property type="term" value="F:heat shock protein binding"/>
    <property type="evidence" value="ECO:0007669"/>
    <property type="project" value="InterPro"/>
</dbReference>
<dbReference type="GO" id="GO:0051082">
    <property type="term" value="F:unfolded protein binding"/>
    <property type="evidence" value="ECO:0007669"/>
    <property type="project" value="UniProtKB-UniRule"/>
</dbReference>
<dbReference type="GO" id="GO:0008270">
    <property type="term" value="F:zinc ion binding"/>
    <property type="evidence" value="ECO:0007669"/>
    <property type="project" value="UniProtKB-UniRule"/>
</dbReference>
<dbReference type="GO" id="GO:0051085">
    <property type="term" value="P:chaperone cofactor-dependent protein refolding"/>
    <property type="evidence" value="ECO:0007669"/>
    <property type="project" value="TreeGrafter"/>
</dbReference>
<dbReference type="GO" id="GO:0006260">
    <property type="term" value="P:DNA replication"/>
    <property type="evidence" value="ECO:0007669"/>
    <property type="project" value="UniProtKB-KW"/>
</dbReference>
<dbReference type="GO" id="GO:0042026">
    <property type="term" value="P:protein refolding"/>
    <property type="evidence" value="ECO:0007669"/>
    <property type="project" value="TreeGrafter"/>
</dbReference>
<dbReference type="GO" id="GO:0009408">
    <property type="term" value="P:response to heat"/>
    <property type="evidence" value="ECO:0007669"/>
    <property type="project" value="InterPro"/>
</dbReference>
<dbReference type="CDD" id="cd06257">
    <property type="entry name" value="DnaJ"/>
    <property type="match status" value="1"/>
</dbReference>
<dbReference type="CDD" id="cd10747">
    <property type="entry name" value="DnaJ_C"/>
    <property type="match status" value="1"/>
</dbReference>
<dbReference type="CDD" id="cd10719">
    <property type="entry name" value="DnaJ_zf"/>
    <property type="match status" value="1"/>
</dbReference>
<dbReference type="FunFam" id="2.10.230.10:FF:000002">
    <property type="entry name" value="Molecular chaperone DnaJ"/>
    <property type="match status" value="1"/>
</dbReference>
<dbReference type="FunFam" id="2.60.260.20:FF:000004">
    <property type="entry name" value="Molecular chaperone DnaJ"/>
    <property type="match status" value="1"/>
</dbReference>
<dbReference type="Gene3D" id="1.10.287.110">
    <property type="entry name" value="DnaJ domain"/>
    <property type="match status" value="1"/>
</dbReference>
<dbReference type="Gene3D" id="2.10.230.10">
    <property type="entry name" value="Heat shock protein DnaJ, cysteine-rich domain"/>
    <property type="match status" value="1"/>
</dbReference>
<dbReference type="Gene3D" id="2.60.260.20">
    <property type="entry name" value="Urease metallochaperone UreE, N-terminal domain"/>
    <property type="match status" value="2"/>
</dbReference>
<dbReference type="HAMAP" id="MF_01152">
    <property type="entry name" value="DnaJ"/>
    <property type="match status" value="1"/>
</dbReference>
<dbReference type="InterPro" id="IPR012724">
    <property type="entry name" value="DnaJ"/>
</dbReference>
<dbReference type="InterPro" id="IPR002939">
    <property type="entry name" value="DnaJ_C"/>
</dbReference>
<dbReference type="InterPro" id="IPR001623">
    <property type="entry name" value="DnaJ_domain"/>
</dbReference>
<dbReference type="InterPro" id="IPR008971">
    <property type="entry name" value="HSP40/DnaJ_pept-bd"/>
</dbReference>
<dbReference type="InterPro" id="IPR001305">
    <property type="entry name" value="HSP_DnaJ_Cys-rich_dom"/>
</dbReference>
<dbReference type="InterPro" id="IPR036410">
    <property type="entry name" value="HSP_DnaJ_Cys-rich_dom_sf"/>
</dbReference>
<dbReference type="InterPro" id="IPR036869">
    <property type="entry name" value="J_dom_sf"/>
</dbReference>
<dbReference type="NCBIfam" id="TIGR02349">
    <property type="entry name" value="DnaJ_bact"/>
    <property type="match status" value="1"/>
</dbReference>
<dbReference type="NCBIfam" id="NF008035">
    <property type="entry name" value="PRK10767.1"/>
    <property type="match status" value="1"/>
</dbReference>
<dbReference type="PANTHER" id="PTHR43096">
    <property type="entry name" value="DNAJ HOMOLOG 1, MITOCHONDRIAL-RELATED"/>
    <property type="match status" value="1"/>
</dbReference>
<dbReference type="PANTHER" id="PTHR43096:SF52">
    <property type="entry name" value="DNAJ HOMOLOG 1, MITOCHONDRIAL-RELATED"/>
    <property type="match status" value="1"/>
</dbReference>
<dbReference type="Pfam" id="PF00226">
    <property type="entry name" value="DnaJ"/>
    <property type="match status" value="1"/>
</dbReference>
<dbReference type="Pfam" id="PF01556">
    <property type="entry name" value="DnaJ_C"/>
    <property type="match status" value="1"/>
</dbReference>
<dbReference type="Pfam" id="PF00684">
    <property type="entry name" value="DnaJ_CXXCXGXG"/>
    <property type="match status" value="1"/>
</dbReference>
<dbReference type="PRINTS" id="PR00625">
    <property type="entry name" value="JDOMAIN"/>
</dbReference>
<dbReference type="SMART" id="SM00271">
    <property type="entry name" value="DnaJ"/>
    <property type="match status" value="1"/>
</dbReference>
<dbReference type="SUPFAM" id="SSF46565">
    <property type="entry name" value="Chaperone J-domain"/>
    <property type="match status" value="1"/>
</dbReference>
<dbReference type="SUPFAM" id="SSF57938">
    <property type="entry name" value="DnaJ/Hsp40 cysteine-rich domain"/>
    <property type="match status" value="1"/>
</dbReference>
<dbReference type="SUPFAM" id="SSF49493">
    <property type="entry name" value="HSP40/DnaJ peptide-binding domain"/>
    <property type="match status" value="2"/>
</dbReference>
<dbReference type="PROSITE" id="PS50076">
    <property type="entry name" value="DNAJ_2"/>
    <property type="match status" value="1"/>
</dbReference>
<dbReference type="PROSITE" id="PS51188">
    <property type="entry name" value="ZF_CR"/>
    <property type="match status" value="1"/>
</dbReference>
<feature type="chain" id="PRO_0000070775" description="Chaperone protein DnaJ">
    <location>
        <begin position="1"/>
        <end position="373"/>
    </location>
</feature>
<feature type="domain" description="J" evidence="1">
    <location>
        <begin position="4"/>
        <end position="69"/>
    </location>
</feature>
<feature type="repeat" description="CXXCXGXG motif">
    <location>
        <begin position="144"/>
        <end position="151"/>
    </location>
</feature>
<feature type="repeat" description="CXXCXGXG motif">
    <location>
        <begin position="161"/>
        <end position="168"/>
    </location>
</feature>
<feature type="repeat" description="CXXCXGXG motif">
    <location>
        <begin position="183"/>
        <end position="190"/>
    </location>
</feature>
<feature type="repeat" description="CXXCXGXG motif">
    <location>
        <begin position="197"/>
        <end position="204"/>
    </location>
</feature>
<feature type="zinc finger region" description="CR-type" evidence="1">
    <location>
        <begin position="131"/>
        <end position="209"/>
    </location>
</feature>
<feature type="binding site" evidence="1">
    <location>
        <position position="144"/>
    </location>
    <ligand>
        <name>Zn(2+)</name>
        <dbReference type="ChEBI" id="CHEBI:29105"/>
        <label>1</label>
    </ligand>
</feature>
<feature type="binding site" evidence="1">
    <location>
        <position position="147"/>
    </location>
    <ligand>
        <name>Zn(2+)</name>
        <dbReference type="ChEBI" id="CHEBI:29105"/>
        <label>1</label>
    </ligand>
</feature>
<feature type="binding site" evidence="1">
    <location>
        <position position="161"/>
    </location>
    <ligand>
        <name>Zn(2+)</name>
        <dbReference type="ChEBI" id="CHEBI:29105"/>
        <label>2</label>
    </ligand>
</feature>
<feature type="binding site" evidence="1">
    <location>
        <position position="164"/>
    </location>
    <ligand>
        <name>Zn(2+)</name>
        <dbReference type="ChEBI" id="CHEBI:29105"/>
        <label>2</label>
    </ligand>
</feature>
<feature type="binding site" evidence="1">
    <location>
        <position position="183"/>
    </location>
    <ligand>
        <name>Zn(2+)</name>
        <dbReference type="ChEBI" id="CHEBI:29105"/>
        <label>2</label>
    </ligand>
</feature>
<feature type="binding site" evidence="1">
    <location>
        <position position="186"/>
    </location>
    <ligand>
        <name>Zn(2+)</name>
        <dbReference type="ChEBI" id="CHEBI:29105"/>
        <label>2</label>
    </ligand>
</feature>
<feature type="binding site" evidence="1">
    <location>
        <position position="197"/>
    </location>
    <ligand>
        <name>Zn(2+)</name>
        <dbReference type="ChEBI" id="CHEBI:29105"/>
        <label>1</label>
    </ligand>
</feature>
<feature type="binding site" evidence="1">
    <location>
        <position position="200"/>
    </location>
    <ligand>
        <name>Zn(2+)</name>
        <dbReference type="ChEBI" id="CHEBI:29105"/>
        <label>1</label>
    </ligand>
</feature>
<evidence type="ECO:0000255" key="1">
    <source>
        <dbReference type="HAMAP-Rule" id="MF_01152"/>
    </source>
</evidence>
<gene>
    <name evidence="1" type="primary">dnaJ</name>
    <name type="ordered locus">DP1482</name>
</gene>
<keyword id="KW-0143">Chaperone</keyword>
<keyword id="KW-0963">Cytoplasm</keyword>
<keyword id="KW-0235">DNA replication</keyword>
<keyword id="KW-0479">Metal-binding</keyword>
<keyword id="KW-1185">Reference proteome</keyword>
<keyword id="KW-0677">Repeat</keyword>
<keyword id="KW-0346">Stress response</keyword>
<keyword id="KW-0862">Zinc</keyword>
<keyword id="KW-0863">Zinc-finger</keyword>
<comment type="function">
    <text evidence="1">Participates actively in the response to hyperosmotic and heat shock by preventing the aggregation of stress-denatured proteins and by disaggregating proteins, also in an autonomous, DnaK-independent fashion. Unfolded proteins bind initially to DnaJ; upon interaction with the DnaJ-bound protein, DnaK hydrolyzes its bound ATP, resulting in the formation of a stable complex. GrpE releases ADP from DnaK; ATP binding to DnaK triggers the release of the substrate protein, thus completing the reaction cycle. Several rounds of ATP-dependent interactions between DnaJ, DnaK and GrpE are required for fully efficient folding. Also involved, together with DnaK and GrpE, in the DNA replication of plasmids through activation of initiation proteins.</text>
</comment>
<comment type="cofactor">
    <cofactor evidence="1">
        <name>Zn(2+)</name>
        <dbReference type="ChEBI" id="CHEBI:29105"/>
    </cofactor>
    <text evidence="1">Binds 2 Zn(2+) ions per monomer.</text>
</comment>
<comment type="subunit">
    <text evidence="1">Homodimer.</text>
</comment>
<comment type="subcellular location">
    <subcellularLocation>
        <location evidence="1">Cytoplasm</location>
    </subcellularLocation>
</comment>
<comment type="domain">
    <text evidence="1">The J domain is necessary and sufficient to stimulate DnaK ATPase activity. Zinc center 1 plays an important role in the autonomous, DnaK-independent chaperone activity of DnaJ. Zinc center 2 is essential for interaction with DnaK and for DnaJ activity.</text>
</comment>
<comment type="similarity">
    <text evidence="1">Belongs to the DnaJ family.</text>
</comment>